<gene>
    <name evidence="1" type="primary">crtN</name>
    <name type="ordered locus">MW2482</name>
</gene>
<keyword id="KW-0125">Carotenoid biosynthesis</keyword>
<keyword id="KW-0274">FAD</keyword>
<keyword id="KW-0285">Flavoprotein</keyword>
<keyword id="KW-0560">Oxidoreductase</keyword>
<keyword id="KW-0843">Virulence</keyword>
<dbReference type="EC" id="1.3.8.-" evidence="1"/>
<dbReference type="EMBL" id="BA000033">
    <property type="protein sequence ID" value="BAB96347.1"/>
    <property type="molecule type" value="Genomic_DNA"/>
</dbReference>
<dbReference type="PIR" id="B55548">
    <property type="entry name" value="B55548"/>
</dbReference>
<dbReference type="RefSeq" id="WP_000686167.1">
    <property type="nucleotide sequence ID" value="NC_003923.1"/>
</dbReference>
<dbReference type="SMR" id="Q8NUQ6"/>
<dbReference type="BindingDB" id="Q8NUQ6"/>
<dbReference type="ChEMBL" id="CHEMBL3832958"/>
<dbReference type="KEGG" id="sam:MW2482"/>
<dbReference type="HOGENOM" id="CLU_019722_2_1_9"/>
<dbReference type="BRENDA" id="1.14.99.44">
    <property type="organism ID" value="3352"/>
</dbReference>
<dbReference type="UniPathway" id="UPA00029">
    <property type="reaction ID" value="UER00557"/>
</dbReference>
<dbReference type="GO" id="GO:0102223">
    <property type="term" value="F:4,4'-diapophytoene desaturase (4,4'-diaponeurosporene-forming)"/>
    <property type="evidence" value="ECO:0007669"/>
    <property type="project" value="RHEA"/>
</dbReference>
<dbReference type="GO" id="GO:0016117">
    <property type="term" value="P:carotenoid biosynthetic process"/>
    <property type="evidence" value="ECO:0007669"/>
    <property type="project" value="UniProtKB-KW"/>
</dbReference>
<dbReference type="Gene3D" id="3.50.50.60">
    <property type="entry name" value="FAD/NAD(P)-binding domain"/>
    <property type="match status" value="2"/>
</dbReference>
<dbReference type="InterPro" id="IPR002937">
    <property type="entry name" value="Amino_oxidase"/>
</dbReference>
<dbReference type="InterPro" id="IPR014105">
    <property type="entry name" value="Carotenoid/retinoid_OxRdtase"/>
</dbReference>
<dbReference type="InterPro" id="IPR036188">
    <property type="entry name" value="FAD/NAD-bd_sf"/>
</dbReference>
<dbReference type="NCBIfam" id="TIGR02734">
    <property type="entry name" value="crtI_fam"/>
    <property type="match status" value="1"/>
</dbReference>
<dbReference type="PANTHER" id="PTHR43734">
    <property type="entry name" value="PHYTOENE DESATURASE"/>
    <property type="match status" value="1"/>
</dbReference>
<dbReference type="PANTHER" id="PTHR43734:SF1">
    <property type="entry name" value="PHYTOENE DESATURASE"/>
    <property type="match status" value="1"/>
</dbReference>
<dbReference type="Pfam" id="PF01593">
    <property type="entry name" value="Amino_oxidase"/>
    <property type="match status" value="1"/>
</dbReference>
<dbReference type="PRINTS" id="PR00419">
    <property type="entry name" value="ADXRDTASE"/>
</dbReference>
<dbReference type="SUPFAM" id="SSF51905">
    <property type="entry name" value="FAD/NAD(P)-binding domain"/>
    <property type="match status" value="1"/>
</dbReference>
<proteinExistence type="inferred from homology"/>
<feature type="chain" id="PRO_0000272198" description="4,4'-diapophytoene desaturase (4,4'-diaponeurosporene-forming)">
    <location>
        <begin position="1"/>
        <end position="502"/>
    </location>
</feature>
<feature type="binding site" evidence="2">
    <location>
        <begin position="5"/>
        <end position="17"/>
    </location>
    <ligand>
        <name>FAD</name>
        <dbReference type="ChEBI" id="CHEBI:57692"/>
    </ligand>
</feature>
<reference key="1">
    <citation type="journal article" date="2002" name="Lancet">
        <title>Genome and virulence determinants of high virulence community-acquired MRSA.</title>
        <authorList>
            <person name="Baba T."/>
            <person name="Takeuchi F."/>
            <person name="Kuroda M."/>
            <person name="Yuzawa H."/>
            <person name="Aoki K."/>
            <person name="Oguchi A."/>
            <person name="Nagai Y."/>
            <person name="Iwama N."/>
            <person name="Asano K."/>
            <person name="Naimi T."/>
            <person name="Kuroda H."/>
            <person name="Cui L."/>
            <person name="Yamamoto K."/>
            <person name="Hiramatsu K."/>
        </authorList>
    </citation>
    <scope>NUCLEOTIDE SEQUENCE [LARGE SCALE GENOMIC DNA]</scope>
    <source>
        <strain>MW2</strain>
    </source>
</reference>
<evidence type="ECO:0000250" key="1">
    <source>
        <dbReference type="UniProtKB" id="O07855"/>
    </source>
</evidence>
<evidence type="ECO:0000255" key="2"/>
<evidence type="ECO:0000305" key="3"/>
<organism>
    <name type="scientific">Staphylococcus aureus (strain MW2)</name>
    <dbReference type="NCBI Taxonomy" id="196620"/>
    <lineage>
        <taxon>Bacteria</taxon>
        <taxon>Bacillati</taxon>
        <taxon>Bacillota</taxon>
        <taxon>Bacilli</taxon>
        <taxon>Bacillales</taxon>
        <taxon>Staphylococcaceae</taxon>
        <taxon>Staphylococcus</taxon>
    </lineage>
</organism>
<sequence length="502" mass="56714">MKIAVIGAGVTGLAAAARIASQGHEVTIFEKNNNVGGRMNQLKKDGFTFDMGPTIVMMPDVYKDVFTACGKNYEDYIELRQLRYIYDVYFDHDDRITVPTDLAELQQMLESIEPGSTHGFMSFLTDVYKKYEIARRYFLERTYRKPSDFYNMTSLVQGAKLKTLNHADQLIEHYIDNEKIQKLLAFQTLYIGIDPKRGPSLYSIIPMIEMMFGVHFIKGGMYGMAQGLAQLNKDLGVNIELNAEIEQIIIDPKFKRADAIKVNGDIRKFDKILCTADFPSVAESLMPDFAPIKKYPPHKIADLDYSCSAFLMYIGIDIDVTDQVRLHNVIFSDDFRGNIEEIFEGRLSYDPSIYVYVPAVADKSLAPEGKTGIYVLMPTPELKTGSGIDWSDEALTQQIKEIIYRKLATIEVFEDIKSHIVSETIFTPNDFEQTYHAKFGSAFGLMPTLAQSNYYRPQNVSRDYKDLYFAGASTHPGAGVPIVLTSAKITVDEMIKDIEQGV</sequence>
<protein>
    <recommendedName>
        <fullName evidence="1">4,4'-diapophytoene desaturase (4,4'-diaponeurosporene-forming)</fullName>
        <ecNumber evidence="1">1.3.8.-</ecNumber>
    </recommendedName>
    <alternativeName>
        <fullName evidence="1">Dehydrosqualene desaturase</fullName>
    </alternativeName>
</protein>
<name>CRTN_STAAW</name>
<comment type="function">
    <text evidence="1">Involved in the biosynthesis of the yellow-orange carotenoid staphyloxanthin, which plays a role in the virulence via its protective function against oxidative stress. Catalyzes three successive dehydrogenation reactions that lead to the introduction of three double bonds into 4,4'-diapophytoene (dehydrosqualene), with 4,4'-diapophytofluene and 4,4'-diapo-zeta-carotene as intermediates, and 4,4'-diaponeurosporene (the major deep-yellow pigment in staphylococci strains) as the end product.</text>
</comment>
<comment type="catalytic activity">
    <reaction evidence="1">
        <text>15-cis-4,4'-diapophytoene + 3 FAD + 3 H(+) = all-trans-4,4'-diaponeurosporene + 3 FADH2</text>
        <dbReference type="Rhea" id="RHEA:42800"/>
        <dbReference type="ChEBI" id="CHEBI:15378"/>
        <dbReference type="ChEBI" id="CHEBI:57692"/>
        <dbReference type="ChEBI" id="CHEBI:58307"/>
        <dbReference type="ChEBI" id="CHEBI:62738"/>
        <dbReference type="ChEBI" id="CHEBI:62743"/>
    </reaction>
</comment>
<comment type="pathway">
    <text evidence="1">Carotenoid biosynthesis; staphyloxanthin biosynthesis; staphyloxanthin from farnesyl diphosphate: step 2/5.</text>
</comment>
<comment type="similarity">
    <text evidence="3">Belongs to the carotenoid/retinoid oxidoreductase family. CrtN subfamily.</text>
</comment>
<accession>Q8NUQ6</accession>